<dbReference type="EMBL" id="AAFI02000111">
    <property type="protein sequence ID" value="EAL63264.1"/>
    <property type="molecule type" value="Genomic_DNA"/>
</dbReference>
<dbReference type="RefSeq" id="XP_636768.1">
    <property type="nucleotide sequence ID" value="XM_631676.1"/>
</dbReference>
<dbReference type="FunCoup" id="Q54J33">
    <property type="interactions" value="6"/>
</dbReference>
<dbReference type="STRING" id="44689.Q54J33"/>
<dbReference type="PaxDb" id="44689-DDB0238366"/>
<dbReference type="EnsemblProtists" id="EAL63264">
    <property type="protein sequence ID" value="EAL63264"/>
    <property type="gene ID" value="DDB_G0288335"/>
</dbReference>
<dbReference type="GeneID" id="8626571"/>
<dbReference type="KEGG" id="ddi:DDB_G0288335"/>
<dbReference type="dictyBase" id="DDB_G0288335">
    <property type="gene designation" value="p2xD"/>
</dbReference>
<dbReference type="VEuPathDB" id="AmoebaDB:DDB_G0288335"/>
<dbReference type="HOGENOM" id="CLU_060033_0_0_1"/>
<dbReference type="InParanoid" id="Q54J33"/>
<dbReference type="OMA" id="RRKRAIC"/>
<dbReference type="PhylomeDB" id="Q54J33"/>
<dbReference type="Reactome" id="R-DDI-139853">
    <property type="pathway name" value="Elevation of cytosolic Ca2+ levels"/>
</dbReference>
<dbReference type="Reactome" id="R-DDI-418346">
    <property type="pathway name" value="Platelet homeostasis"/>
</dbReference>
<dbReference type="Reactome" id="R-DDI-6798695">
    <property type="pathway name" value="Neutrophil degranulation"/>
</dbReference>
<dbReference type="Reactome" id="R-DDI-844456">
    <property type="pathway name" value="The NLRP3 inflammasome"/>
</dbReference>
<dbReference type="PRO" id="PR:Q54J33"/>
<dbReference type="Proteomes" id="UP000002195">
    <property type="component" value="Chromosome 5"/>
</dbReference>
<dbReference type="GO" id="GO:0031164">
    <property type="term" value="C:contractile vacuolar membrane"/>
    <property type="evidence" value="ECO:0000314"/>
    <property type="project" value="dictyBase"/>
</dbReference>
<dbReference type="GO" id="GO:0035381">
    <property type="term" value="F:ATP-gated ion channel activity"/>
    <property type="evidence" value="ECO:0000318"/>
    <property type="project" value="GO_Central"/>
</dbReference>
<dbReference type="GO" id="GO:0140417">
    <property type="term" value="F:intracellularly ATP-gated calcium channel activity"/>
    <property type="evidence" value="ECO:0000316"/>
    <property type="project" value="dictyBase"/>
</dbReference>
<dbReference type="GO" id="GO:0070588">
    <property type="term" value="P:calcium ion transmembrane transport"/>
    <property type="evidence" value="ECO:0000316"/>
    <property type="project" value="dictyBase"/>
</dbReference>
<dbReference type="GO" id="GO:0071476">
    <property type="term" value="P:cellular hypotonic response"/>
    <property type="evidence" value="ECO:0000316"/>
    <property type="project" value="dictyBase"/>
</dbReference>
<dbReference type="GO" id="GO:0050848">
    <property type="term" value="P:regulation of calcium-mediated signaling"/>
    <property type="evidence" value="ECO:0000316"/>
    <property type="project" value="dictyBase"/>
</dbReference>
<dbReference type="FunFam" id="1.10.287.940:FF:000010">
    <property type="entry name" value="P2X receptor E"/>
    <property type="match status" value="1"/>
</dbReference>
<dbReference type="Gene3D" id="1.10.287.940">
    <property type="entry name" value="atp-gated p2x4 ion channel"/>
    <property type="match status" value="2"/>
</dbReference>
<dbReference type="PANTHER" id="PTHR10125">
    <property type="entry name" value="P2X PURINOCEPTOR"/>
    <property type="match status" value="1"/>
</dbReference>
<dbReference type="PANTHER" id="PTHR10125:SF27">
    <property type="entry name" value="P2X RECEPTOR A-RELATED"/>
    <property type="match status" value="1"/>
</dbReference>
<dbReference type="Pfam" id="PF00864">
    <property type="entry name" value="P2X_receptor"/>
    <property type="match status" value="2"/>
</dbReference>
<keyword id="KW-0407">Ion channel</keyword>
<keyword id="KW-0406">Ion transport</keyword>
<keyword id="KW-1071">Ligand-gated ion channel</keyword>
<keyword id="KW-0472">Membrane</keyword>
<keyword id="KW-0675">Receptor</keyword>
<keyword id="KW-1185">Reference proteome</keyword>
<keyword id="KW-0812">Transmembrane</keyword>
<keyword id="KW-1133">Transmembrane helix</keyword>
<keyword id="KW-0813">Transport</keyword>
<keyword id="KW-0926">Vacuole</keyword>
<reference key="1">
    <citation type="journal article" date="2005" name="Nature">
        <title>The genome of the social amoeba Dictyostelium discoideum.</title>
        <authorList>
            <person name="Eichinger L."/>
            <person name="Pachebat J.A."/>
            <person name="Gloeckner G."/>
            <person name="Rajandream M.A."/>
            <person name="Sucgang R."/>
            <person name="Berriman M."/>
            <person name="Song J."/>
            <person name="Olsen R."/>
            <person name="Szafranski K."/>
            <person name="Xu Q."/>
            <person name="Tunggal B."/>
            <person name="Kummerfeld S."/>
            <person name="Madera M."/>
            <person name="Konfortov B.A."/>
            <person name="Rivero F."/>
            <person name="Bankier A.T."/>
            <person name="Lehmann R."/>
            <person name="Hamlin N."/>
            <person name="Davies R."/>
            <person name="Gaudet P."/>
            <person name="Fey P."/>
            <person name="Pilcher K."/>
            <person name="Chen G."/>
            <person name="Saunders D."/>
            <person name="Sodergren E.J."/>
            <person name="Davis P."/>
            <person name="Kerhornou A."/>
            <person name="Nie X."/>
            <person name="Hall N."/>
            <person name="Anjard C."/>
            <person name="Hemphill L."/>
            <person name="Bason N."/>
            <person name="Farbrother P."/>
            <person name="Desany B."/>
            <person name="Just E."/>
            <person name="Morio T."/>
            <person name="Rost R."/>
            <person name="Churcher C.M."/>
            <person name="Cooper J."/>
            <person name="Haydock S."/>
            <person name="van Driessche N."/>
            <person name="Cronin A."/>
            <person name="Goodhead I."/>
            <person name="Muzny D.M."/>
            <person name="Mourier T."/>
            <person name="Pain A."/>
            <person name="Lu M."/>
            <person name="Harper D."/>
            <person name="Lindsay R."/>
            <person name="Hauser H."/>
            <person name="James K.D."/>
            <person name="Quiles M."/>
            <person name="Madan Babu M."/>
            <person name="Saito T."/>
            <person name="Buchrieser C."/>
            <person name="Wardroper A."/>
            <person name="Felder M."/>
            <person name="Thangavelu M."/>
            <person name="Johnson D."/>
            <person name="Knights A."/>
            <person name="Loulseged H."/>
            <person name="Mungall K.L."/>
            <person name="Oliver K."/>
            <person name="Price C."/>
            <person name="Quail M.A."/>
            <person name="Urushihara H."/>
            <person name="Hernandez J."/>
            <person name="Rabbinowitsch E."/>
            <person name="Steffen D."/>
            <person name="Sanders M."/>
            <person name="Ma J."/>
            <person name="Kohara Y."/>
            <person name="Sharp S."/>
            <person name="Simmonds M.N."/>
            <person name="Spiegler S."/>
            <person name="Tivey A."/>
            <person name="Sugano S."/>
            <person name="White B."/>
            <person name="Walker D."/>
            <person name="Woodward J.R."/>
            <person name="Winckler T."/>
            <person name="Tanaka Y."/>
            <person name="Shaulsky G."/>
            <person name="Schleicher M."/>
            <person name="Weinstock G.M."/>
            <person name="Rosenthal A."/>
            <person name="Cox E.C."/>
            <person name="Chisholm R.L."/>
            <person name="Gibbs R.A."/>
            <person name="Loomis W.F."/>
            <person name="Platzer M."/>
            <person name="Kay R.R."/>
            <person name="Williams J.G."/>
            <person name="Dear P.H."/>
            <person name="Noegel A.A."/>
            <person name="Barrell B.G."/>
            <person name="Kuspa A."/>
        </authorList>
    </citation>
    <scope>NUCLEOTIDE SEQUENCE [LARGE SCALE GENOMIC DNA]</scope>
    <source>
        <strain>AX4</strain>
    </source>
</reference>
<reference key="2">
    <citation type="journal article" date="2009" name="J. Biol. Chem.">
        <title>Functional characterization of intracellular Dictyostelium discoideum P2X receptors.</title>
        <authorList>
            <person name="Ludlow M.J."/>
            <person name="Durai L."/>
            <person name="Ennion S.J."/>
        </authorList>
    </citation>
    <scope>FUNCTION</scope>
    <scope>SUBCELLULAR LOCATION</scope>
    <scope>DISRUPTION PHENOTYPE</scope>
</reference>
<feature type="chain" id="PRO_0000390414" description="P2X receptor D">
    <location>
        <begin position="1"/>
        <end position="407"/>
    </location>
</feature>
<feature type="topological domain" description="Cytoplasmic" evidence="1">
    <location>
        <begin position="1"/>
        <end position="22"/>
    </location>
</feature>
<feature type="transmembrane region" description="Helical" evidence="1">
    <location>
        <begin position="23"/>
        <end position="43"/>
    </location>
</feature>
<feature type="topological domain" description="Lumenal" evidence="1">
    <location>
        <begin position="44"/>
        <end position="300"/>
    </location>
</feature>
<feature type="transmembrane region" description="Helical" evidence="1">
    <location>
        <begin position="301"/>
        <end position="321"/>
    </location>
</feature>
<feature type="topological domain" description="Cytoplasmic" evidence="1">
    <location>
        <begin position="322"/>
        <end position="407"/>
    </location>
</feature>
<feature type="region of interest" description="Pore-forming motif" evidence="1">
    <location>
        <begin position="283"/>
        <end position="296"/>
    </location>
</feature>
<feature type="region of interest" description="Disordered" evidence="2">
    <location>
        <begin position="371"/>
        <end position="394"/>
    </location>
</feature>
<feature type="compositionally biased region" description="Acidic residues" evidence="2">
    <location>
        <begin position="381"/>
        <end position="391"/>
    </location>
</feature>
<protein>
    <recommendedName>
        <fullName>P2X receptor D</fullName>
        <shortName>P2XD</shortName>
    </recommendedName>
</protein>
<sequence length="407" mass="46362">MDWDNIFSYNTAKIVTIKDRRLGGLHIIFMVLIIVYIVIYSTIYKKGYLLTETPVGSIRASLLAPNEFKDDSNFKYCDDNLIEYNFTKLECDYYDEAFVSFPVGDDVSFAVTTRVKTLDQVLNCSSKNPKCKYTTVSTRNVYVSDIEDFTILIDHTMFAPSSLIQYNSKQLKGYILDNDNNEIQINETINTVGIPGKPDILTIGKLLQLANIDLDGASSVNSTNSVRYDGVVALVFITYSNTFSYNTNNFKYVYSIQKVEDTEYGVPEAVILDNVSSRMYYNRHGIRLIFIQNGEIGSFNFQALLLTFVSGLGLLAISTVLVDQLAIRFLPERKTYSSHKFQITHGFSESRNKLRISQNEKDPLLLVETTKNNENNNNNDDYNDDDNEIFDDNNNGYQNIQNNNIIL</sequence>
<gene>
    <name type="primary">p2xD</name>
    <name type="ORF">DDB_G0288335</name>
</gene>
<accession>Q54J33</accession>
<organism>
    <name type="scientific">Dictyostelium discoideum</name>
    <name type="common">Social amoeba</name>
    <dbReference type="NCBI Taxonomy" id="44689"/>
    <lineage>
        <taxon>Eukaryota</taxon>
        <taxon>Amoebozoa</taxon>
        <taxon>Evosea</taxon>
        <taxon>Eumycetozoa</taxon>
        <taxon>Dictyostelia</taxon>
        <taxon>Dictyosteliales</taxon>
        <taxon>Dictyosteliaceae</taxon>
        <taxon>Dictyostelium</taxon>
    </lineage>
</organism>
<proteinExistence type="inferred from homology"/>
<comment type="function">
    <text evidence="3">P2X receptors are ligand-gated ion channels that play a role in intracellular calcium signaling. ATP does not evoke inward currents in p2xD. Not essential for osmoregulation.</text>
</comment>
<comment type="subcellular location">
    <subcellularLocation>
        <location evidence="3">Contractile vacuole membrane</location>
    </subcellularLocation>
    <text>Ligand binding domain within the lumen of the vacuole.</text>
</comment>
<comment type="disruption phenotype">
    <text evidence="3">Null cells are still capable of osmoregulation and do not show any noticeable differences in their sensitivity to hypotonic conditions. Quintuple p2xA/p2xB/p2xC/p2xD/p2xE null cells display slight delay in their osmoregulatory response, but are still capable of regulating their cell volume in water. Extracellular purinergic response to ATP persists in the quintuple null cells and p2xD single null strains with no alteration in the kinetics of the response, but the magnitude of the response is lower. Responses to the calmodulin antagonist calmidazolium are reduced and intracellular calcium signaling is disrupted in quintuple null cells. The presence of copper prevented both wild type and quintuple null cells from undergoing an osmoregulatory decrease in cell volume. No obvious morphological phenotype was apparent in the p2xD or quintuple p2x null strains. Null cells grow and are also able to develop normally upon starvation to form fruiting bodies. The quintuple null strain however did grow slightly slower than wild type in shaking axenic cultures.</text>
</comment>
<comment type="similarity">
    <text evidence="4">Belongs to the P2X receptor family.</text>
</comment>
<name>P2XD_DICDI</name>
<evidence type="ECO:0000255" key="1"/>
<evidence type="ECO:0000256" key="2">
    <source>
        <dbReference type="SAM" id="MobiDB-lite"/>
    </source>
</evidence>
<evidence type="ECO:0000269" key="3">
    <source>
    </source>
</evidence>
<evidence type="ECO:0000305" key="4"/>